<name>RLME_BURP6</name>
<dbReference type="EC" id="2.1.1.166" evidence="1"/>
<dbReference type="EMBL" id="CP000570">
    <property type="protein sequence ID" value="ABN81552.1"/>
    <property type="molecule type" value="Genomic_DNA"/>
</dbReference>
<dbReference type="RefSeq" id="WP_004193119.1">
    <property type="nucleotide sequence ID" value="NC_009074.1"/>
</dbReference>
<dbReference type="SMR" id="A3N853"/>
<dbReference type="KEGG" id="bpd:BURPS668_1481"/>
<dbReference type="HOGENOM" id="CLU_009422_4_1_4"/>
<dbReference type="GO" id="GO:0005737">
    <property type="term" value="C:cytoplasm"/>
    <property type="evidence" value="ECO:0007669"/>
    <property type="project" value="UniProtKB-SubCell"/>
</dbReference>
<dbReference type="GO" id="GO:0008650">
    <property type="term" value="F:rRNA (uridine-2'-O-)-methyltransferase activity"/>
    <property type="evidence" value="ECO:0007669"/>
    <property type="project" value="UniProtKB-UniRule"/>
</dbReference>
<dbReference type="FunFam" id="3.40.50.150:FF:000005">
    <property type="entry name" value="Ribosomal RNA large subunit methyltransferase E"/>
    <property type="match status" value="1"/>
</dbReference>
<dbReference type="Gene3D" id="3.40.50.150">
    <property type="entry name" value="Vaccinia Virus protein VP39"/>
    <property type="match status" value="1"/>
</dbReference>
<dbReference type="HAMAP" id="MF_01547">
    <property type="entry name" value="RNA_methyltr_E"/>
    <property type="match status" value="1"/>
</dbReference>
<dbReference type="InterPro" id="IPR050082">
    <property type="entry name" value="RNA_methyltr_RlmE"/>
</dbReference>
<dbReference type="InterPro" id="IPR002877">
    <property type="entry name" value="RNA_MeTrfase_FtsJ_dom"/>
</dbReference>
<dbReference type="InterPro" id="IPR015507">
    <property type="entry name" value="rRNA-MeTfrase_E"/>
</dbReference>
<dbReference type="InterPro" id="IPR029063">
    <property type="entry name" value="SAM-dependent_MTases_sf"/>
</dbReference>
<dbReference type="PANTHER" id="PTHR10920">
    <property type="entry name" value="RIBOSOMAL RNA METHYLTRANSFERASE"/>
    <property type="match status" value="1"/>
</dbReference>
<dbReference type="PANTHER" id="PTHR10920:SF18">
    <property type="entry name" value="RRNA METHYLTRANSFERASE 2, MITOCHONDRIAL"/>
    <property type="match status" value="1"/>
</dbReference>
<dbReference type="Pfam" id="PF01728">
    <property type="entry name" value="FtsJ"/>
    <property type="match status" value="1"/>
</dbReference>
<dbReference type="PIRSF" id="PIRSF005461">
    <property type="entry name" value="23S_rRNA_mtase"/>
    <property type="match status" value="1"/>
</dbReference>
<dbReference type="SUPFAM" id="SSF53335">
    <property type="entry name" value="S-adenosyl-L-methionine-dependent methyltransferases"/>
    <property type="match status" value="1"/>
</dbReference>
<protein>
    <recommendedName>
        <fullName evidence="1">Ribosomal RNA large subunit methyltransferase E</fullName>
        <ecNumber evidence="1">2.1.1.166</ecNumber>
    </recommendedName>
    <alternativeName>
        <fullName evidence="1">23S rRNA Um2552 methyltransferase</fullName>
    </alternativeName>
    <alternativeName>
        <fullName evidence="1">rRNA (uridine-2'-O-)-methyltransferase</fullName>
    </alternativeName>
</protein>
<evidence type="ECO:0000255" key="1">
    <source>
        <dbReference type="HAMAP-Rule" id="MF_01547"/>
    </source>
</evidence>
<evidence type="ECO:0000256" key="2">
    <source>
        <dbReference type="SAM" id="MobiDB-lite"/>
    </source>
</evidence>
<organism>
    <name type="scientific">Burkholderia pseudomallei (strain 668)</name>
    <dbReference type="NCBI Taxonomy" id="320373"/>
    <lineage>
        <taxon>Bacteria</taxon>
        <taxon>Pseudomonadati</taxon>
        <taxon>Pseudomonadota</taxon>
        <taxon>Betaproteobacteria</taxon>
        <taxon>Burkholderiales</taxon>
        <taxon>Burkholderiaceae</taxon>
        <taxon>Burkholderia</taxon>
        <taxon>pseudomallei group</taxon>
    </lineage>
</organism>
<proteinExistence type="inferred from homology"/>
<reference key="1">
    <citation type="journal article" date="2010" name="Genome Biol. Evol.">
        <title>Continuing evolution of Burkholderia mallei through genome reduction and large-scale rearrangements.</title>
        <authorList>
            <person name="Losada L."/>
            <person name="Ronning C.M."/>
            <person name="DeShazer D."/>
            <person name="Woods D."/>
            <person name="Fedorova N."/>
            <person name="Kim H.S."/>
            <person name="Shabalina S.A."/>
            <person name="Pearson T.R."/>
            <person name="Brinkac L."/>
            <person name="Tan P."/>
            <person name="Nandi T."/>
            <person name="Crabtree J."/>
            <person name="Badger J."/>
            <person name="Beckstrom-Sternberg S."/>
            <person name="Saqib M."/>
            <person name="Schutzer S.E."/>
            <person name="Keim P."/>
            <person name="Nierman W.C."/>
        </authorList>
    </citation>
    <scope>NUCLEOTIDE SEQUENCE [LARGE SCALE GENOMIC DNA]</scope>
    <source>
        <strain>668</strain>
    </source>
</reference>
<gene>
    <name evidence="1" type="primary">rlmE</name>
    <name evidence="1" type="synonym">ftsJ</name>
    <name evidence="1" type="synonym">rrmJ</name>
    <name type="ordered locus">BURPS668_1481</name>
</gene>
<feature type="chain" id="PRO_1000087677" description="Ribosomal RNA large subunit methyltransferase E">
    <location>
        <begin position="1"/>
        <end position="220"/>
    </location>
</feature>
<feature type="region of interest" description="Disordered" evidence="2">
    <location>
        <begin position="195"/>
        <end position="220"/>
    </location>
</feature>
<feature type="active site" description="Proton acceptor" evidence="1">
    <location>
        <position position="173"/>
    </location>
</feature>
<feature type="binding site" evidence="1">
    <location>
        <position position="60"/>
    </location>
    <ligand>
        <name>S-adenosyl-L-methionine</name>
        <dbReference type="ChEBI" id="CHEBI:59789"/>
    </ligand>
</feature>
<feature type="binding site" evidence="1">
    <location>
        <position position="62"/>
    </location>
    <ligand>
        <name>S-adenosyl-L-methionine</name>
        <dbReference type="ChEBI" id="CHEBI:59789"/>
    </ligand>
</feature>
<feature type="binding site" evidence="1">
    <location>
        <position position="92"/>
    </location>
    <ligand>
        <name>S-adenosyl-L-methionine</name>
        <dbReference type="ChEBI" id="CHEBI:59789"/>
    </ligand>
</feature>
<feature type="binding site" evidence="1">
    <location>
        <position position="108"/>
    </location>
    <ligand>
        <name>S-adenosyl-L-methionine</name>
        <dbReference type="ChEBI" id="CHEBI:59789"/>
    </ligand>
</feature>
<feature type="binding site" evidence="1">
    <location>
        <position position="133"/>
    </location>
    <ligand>
        <name>S-adenosyl-L-methionine</name>
        <dbReference type="ChEBI" id="CHEBI:59789"/>
    </ligand>
</feature>
<keyword id="KW-0963">Cytoplasm</keyword>
<keyword id="KW-0489">Methyltransferase</keyword>
<keyword id="KW-0698">rRNA processing</keyword>
<keyword id="KW-0949">S-adenosyl-L-methionine</keyword>
<keyword id="KW-0808">Transferase</keyword>
<accession>A3N853</accession>
<comment type="function">
    <text evidence="1">Specifically methylates the uridine in position 2552 of 23S rRNA at the 2'-O position of the ribose in the fully assembled 50S ribosomal subunit.</text>
</comment>
<comment type="catalytic activity">
    <reaction evidence="1">
        <text>uridine(2552) in 23S rRNA + S-adenosyl-L-methionine = 2'-O-methyluridine(2552) in 23S rRNA + S-adenosyl-L-homocysteine + H(+)</text>
        <dbReference type="Rhea" id="RHEA:42720"/>
        <dbReference type="Rhea" id="RHEA-COMP:10202"/>
        <dbReference type="Rhea" id="RHEA-COMP:10203"/>
        <dbReference type="ChEBI" id="CHEBI:15378"/>
        <dbReference type="ChEBI" id="CHEBI:57856"/>
        <dbReference type="ChEBI" id="CHEBI:59789"/>
        <dbReference type="ChEBI" id="CHEBI:65315"/>
        <dbReference type="ChEBI" id="CHEBI:74478"/>
        <dbReference type="EC" id="2.1.1.166"/>
    </reaction>
</comment>
<comment type="subcellular location">
    <subcellularLocation>
        <location evidence="1">Cytoplasm</location>
    </subcellularLocation>
</comment>
<comment type="similarity">
    <text evidence="1">Belongs to the class I-like SAM-binding methyltransferase superfamily. RNA methyltransferase RlmE family.</text>
</comment>
<sequence length="220" mass="24660">MAKNRFNQSWLHDHINDPYVKMAQREGYRARAAYKLKEIDEQDKLIRPGQVIVDLGAAPGSWSQYARNKLAQGKRRDAVREGGIDGTIIALDMLPMEPVADVHFIQGDFREESVLHQLEEVLAGRAVDLVISDMAPNLSGVAVADAARIEHVCDLALEFAQNHLKPDGALLVKCFHGSGYSQIVEKFKHQFKTVAPRKPKASRDKSSETFILGRHLKQPR</sequence>